<dbReference type="EMBL" id="MH282819">
    <property type="protein sequence ID" value="AYP73026.1"/>
    <property type="molecule type" value="mRNA"/>
</dbReference>
<dbReference type="GO" id="GO:0005576">
    <property type="term" value="C:extracellular region"/>
    <property type="evidence" value="ECO:0007669"/>
    <property type="project" value="UniProtKB-SubCell"/>
</dbReference>
<dbReference type="GO" id="GO:0035792">
    <property type="term" value="C:host cell postsynaptic membrane"/>
    <property type="evidence" value="ECO:0007669"/>
    <property type="project" value="UniProtKB-KW"/>
</dbReference>
<dbReference type="GO" id="GO:0030550">
    <property type="term" value="F:acetylcholine receptor inhibitor activity"/>
    <property type="evidence" value="ECO:0007669"/>
    <property type="project" value="UniProtKB-KW"/>
</dbReference>
<dbReference type="GO" id="GO:0090729">
    <property type="term" value="F:toxin activity"/>
    <property type="evidence" value="ECO:0007669"/>
    <property type="project" value="UniProtKB-KW"/>
</dbReference>
<dbReference type="InterPro" id="IPR009958">
    <property type="entry name" value="Conotoxin_a-typ"/>
</dbReference>
<dbReference type="Pfam" id="PF07365">
    <property type="entry name" value="Toxin_8"/>
    <property type="match status" value="1"/>
</dbReference>
<organism>
    <name type="scientific">Conus amadis</name>
    <name type="common">Amadis cone</name>
    <dbReference type="NCBI Taxonomy" id="198732"/>
    <lineage>
        <taxon>Eukaryota</taxon>
        <taxon>Metazoa</taxon>
        <taxon>Spiralia</taxon>
        <taxon>Lophotrochozoa</taxon>
        <taxon>Mollusca</taxon>
        <taxon>Gastropoda</taxon>
        <taxon>Caenogastropoda</taxon>
        <taxon>Neogastropoda</taxon>
        <taxon>Conoidea</taxon>
        <taxon>Conidae</taxon>
        <taxon>Conus</taxon>
        <taxon>Leptoconus</taxon>
    </lineage>
</organism>
<feature type="signal peptide" evidence="2">
    <location>
        <begin position="1"/>
        <end position="21"/>
    </location>
</feature>
<feature type="propeptide" id="PRO_0000453587" evidence="5">
    <location>
        <begin position="22"/>
        <end position="44"/>
    </location>
</feature>
<feature type="peptide" id="PRO_5018196840" description="Alpha-conotoxine-like Am1.4" evidence="3">
    <location>
        <begin position="45"/>
        <end position="61"/>
    </location>
</feature>
<name>CA14_CONAA</name>
<accession>A0A3G3C7U4</accession>
<proteinExistence type="evidence at protein level"/>
<comment type="function">
    <text evidence="1">Alpha-conotoxins act on postsynaptic membranes, they bind to the nicotinic acetylcholine receptors (nAChR) and thus inhibit them.</text>
</comment>
<comment type="subcellular location">
    <subcellularLocation>
        <location evidence="3">Secreted</location>
    </subcellularLocation>
</comment>
<comment type="tissue specificity">
    <text evidence="5">Expressed by the venom duct.</text>
</comment>
<comment type="domain">
    <text evidence="4">The cysteine framework is I (CC-C-C). Alpha4/7 pattern.</text>
</comment>
<comment type="PTM">
    <text evidence="3">Is not hydroxylated.</text>
</comment>
<comment type="PTM">
    <text evidence="4">Contains 2 disulfide bonds.</text>
</comment>
<comment type="similarity">
    <text evidence="4">Belongs to the conotoxin A superfamily.</text>
</comment>
<keyword id="KW-0008">Acetylcholine receptor inhibiting toxin</keyword>
<keyword id="KW-0903">Direct protein sequencing</keyword>
<keyword id="KW-1015">Disulfide bond</keyword>
<keyword id="KW-0528">Neurotoxin</keyword>
<keyword id="KW-0629">Postsynaptic neurotoxin</keyword>
<keyword id="KW-0964">Secreted</keyword>
<keyword id="KW-0732">Signal</keyword>
<keyword id="KW-0800">Toxin</keyword>
<evidence type="ECO:0000250" key="1">
    <source>
        <dbReference type="UniProtKB" id="E2DIH5"/>
    </source>
</evidence>
<evidence type="ECO:0000255" key="2"/>
<evidence type="ECO:0000269" key="3">
    <source>
    </source>
</evidence>
<evidence type="ECO:0000305" key="4"/>
<evidence type="ECO:0000305" key="5">
    <source>
    </source>
</evidence>
<protein>
    <recommendedName>
        <fullName evidence="4">Alpha-conotoxine-like Am1.4</fullName>
    </recommendedName>
</protein>
<reference key="1">
    <citation type="journal article" date="2019" name="J. Proteomics">
        <title>Cone snail prolyl-4-hydroxylase alpha-subunit sequences derived from transcriptomic data and mass spectrometric analysis of variable proline hydroxylation in C. amadis venom.</title>
        <authorList>
            <person name="Vijayasarathy M."/>
            <person name="Balaram P."/>
        </authorList>
    </citation>
    <scope>NUCLEOTIDE SEQUENCE [MRNA]</scope>
    <scope>PROTEIN SEQUENCE OF 45-61</scope>
    <scope>SUBCELLULAR LOCATION</scope>
    <scope>IDENTIFICATION BY MASS SPECTROMETRY</scope>
    <source>
        <tissue>Venom</tissue>
        <tissue>Venom duct</tissue>
    </source>
</reference>
<sequence length="61" mass="6441">MGMRMMFTVFLLVVLATTVVSFMSGRASHGRNAAASDLIALTIKGCCSVPPCIANHPELCV</sequence>